<evidence type="ECO:0000250" key="1">
    <source>
        <dbReference type="UniProtKB" id="Q04401"/>
    </source>
</evidence>
<evidence type="ECO:0000250" key="2">
    <source>
        <dbReference type="UniProtKB" id="Q8SZ16"/>
    </source>
</evidence>
<evidence type="ECO:0000255" key="3"/>
<evidence type="ECO:0000305" key="4"/>
<evidence type="ECO:0000312" key="5">
    <source>
        <dbReference type="PomBase" id="SPBP23A10.03c"/>
    </source>
</evidence>
<proteinExistence type="inferred from homology"/>
<accession>Q9P7Y2</accession>
<sequence>MNNITKLMKQKNILTPPLPLYRRVLRAHRYHLGAEERALGDEYVKAEFRRHRNVTNPLHLVGFLSSWERYADALENESWKQEKYSNTDLLESLNDQQIGQLYELSKALQEQKKSE</sequence>
<organism>
    <name type="scientific">Schizosaccharomyces pombe (strain 972 / ATCC 24843)</name>
    <name type="common">Fission yeast</name>
    <dbReference type="NCBI Taxonomy" id="284812"/>
    <lineage>
        <taxon>Eukaryota</taxon>
        <taxon>Fungi</taxon>
        <taxon>Dikarya</taxon>
        <taxon>Ascomycota</taxon>
        <taxon>Taphrinomycotina</taxon>
        <taxon>Schizosaccharomycetes</taxon>
        <taxon>Schizosaccharomycetales</taxon>
        <taxon>Schizosaccharomycetaceae</taxon>
        <taxon>Schizosaccharomyces</taxon>
    </lineage>
</organism>
<feature type="transit peptide" description="Mitochondrion" evidence="3">
    <location>
        <begin position="1"/>
        <end status="unknown"/>
    </location>
</feature>
<feature type="chain" id="PRO_0000042751" description="Succinate dehydrogenase assembly factor 3, mitochondrial">
    <location>
        <begin status="unknown"/>
        <end position="115"/>
    </location>
</feature>
<reference key="1">
    <citation type="journal article" date="2002" name="Nature">
        <title>The genome sequence of Schizosaccharomyces pombe.</title>
        <authorList>
            <person name="Wood V."/>
            <person name="Gwilliam R."/>
            <person name="Rajandream M.A."/>
            <person name="Lyne M.H."/>
            <person name="Lyne R."/>
            <person name="Stewart A."/>
            <person name="Sgouros J.G."/>
            <person name="Peat N."/>
            <person name="Hayles J."/>
            <person name="Baker S.G."/>
            <person name="Basham D."/>
            <person name="Bowman S."/>
            <person name="Brooks K."/>
            <person name="Brown D."/>
            <person name="Brown S."/>
            <person name="Chillingworth T."/>
            <person name="Churcher C.M."/>
            <person name="Collins M."/>
            <person name="Connor R."/>
            <person name="Cronin A."/>
            <person name="Davis P."/>
            <person name="Feltwell T."/>
            <person name="Fraser A."/>
            <person name="Gentles S."/>
            <person name="Goble A."/>
            <person name="Hamlin N."/>
            <person name="Harris D.E."/>
            <person name="Hidalgo J."/>
            <person name="Hodgson G."/>
            <person name="Holroyd S."/>
            <person name="Hornsby T."/>
            <person name="Howarth S."/>
            <person name="Huckle E.J."/>
            <person name="Hunt S."/>
            <person name="Jagels K."/>
            <person name="James K.D."/>
            <person name="Jones L."/>
            <person name="Jones M."/>
            <person name="Leather S."/>
            <person name="McDonald S."/>
            <person name="McLean J."/>
            <person name="Mooney P."/>
            <person name="Moule S."/>
            <person name="Mungall K.L."/>
            <person name="Murphy L.D."/>
            <person name="Niblett D."/>
            <person name="Odell C."/>
            <person name="Oliver K."/>
            <person name="O'Neil S."/>
            <person name="Pearson D."/>
            <person name="Quail M.A."/>
            <person name="Rabbinowitsch E."/>
            <person name="Rutherford K.M."/>
            <person name="Rutter S."/>
            <person name="Saunders D."/>
            <person name="Seeger K."/>
            <person name="Sharp S."/>
            <person name="Skelton J."/>
            <person name="Simmonds M.N."/>
            <person name="Squares R."/>
            <person name="Squares S."/>
            <person name="Stevens K."/>
            <person name="Taylor K."/>
            <person name="Taylor R.G."/>
            <person name="Tivey A."/>
            <person name="Walsh S.V."/>
            <person name="Warren T."/>
            <person name="Whitehead S."/>
            <person name="Woodward J.R."/>
            <person name="Volckaert G."/>
            <person name="Aert R."/>
            <person name="Robben J."/>
            <person name="Grymonprez B."/>
            <person name="Weltjens I."/>
            <person name="Vanstreels E."/>
            <person name="Rieger M."/>
            <person name="Schaefer M."/>
            <person name="Mueller-Auer S."/>
            <person name="Gabel C."/>
            <person name="Fuchs M."/>
            <person name="Duesterhoeft A."/>
            <person name="Fritzc C."/>
            <person name="Holzer E."/>
            <person name="Moestl D."/>
            <person name="Hilbert H."/>
            <person name="Borzym K."/>
            <person name="Langer I."/>
            <person name="Beck A."/>
            <person name="Lehrach H."/>
            <person name="Reinhardt R."/>
            <person name="Pohl T.M."/>
            <person name="Eger P."/>
            <person name="Zimmermann W."/>
            <person name="Wedler H."/>
            <person name="Wambutt R."/>
            <person name="Purnelle B."/>
            <person name="Goffeau A."/>
            <person name="Cadieu E."/>
            <person name="Dreano S."/>
            <person name="Gloux S."/>
            <person name="Lelaure V."/>
            <person name="Mottier S."/>
            <person name="Galibert F."/>
            <person name="Aves S.J."/>
            <person name="Xiang Z."/>
            <person name="Hunt C."/>
            <person name="Moore K."/>
            <person name="Hurst S.M."/>
            <person name="Lucas M."/>
            <person name="Rochet M."/>
            <person name="Gaillardin C."/>
            <person name="Tallada V.A."/>
            <person name="Garzon A."/>
            <person name="Thode G."/>
            <person name="Daga R.R."/>
            <person name="Cruzado L."/>
            <person name="Jimenez J."/>
            <person name="Sanchez M."/>
            <person name="del Rey F."/>
            <person name="Benito J."/>
            <person name="Dominguez A."/>
            <person name="Revuelta J.L."/>
            <person name="Moreno S."/>
            <person name="Armstrong J."/>
            <person name="Forsburg S.L."/>
            <person name="Cerutti L."/>
            <person name="Lowe T."/>
            <person name="McCombie W.R."/>
            <person name="Paulsen I."/>
            <person name="Potashkin J."/>
            <person name="Shpakovski G.V."/>
            <person name="Ussery D."/>
            <person name="Barrell B.G."/>
            <person name="Nurse P."/>
        </authorList>
    </citation>
    <scope>NUCLEOTIDE SEQUENCE [LARGE SCALE GENOMIC DNA]</scope>
    <source>
        <strain>972 / ATCC 24843</strain>
    </source>
</reference>
<comment type="function">
    <text evidence="1 2">Plays an essential role in the assembly of succinate dehydrogenase (SDH), an enzyme complex (also referred to as respiratory complex II) that is a component of both the tricarboxylic acid (TCA) cycle and the mitochondrial electron transport chain, and which couples the oxidation of succinate to fumarate with the reduction of ubiquinone (coenzyme Q) to ubiquinol. Promotes maturation of the iron-sulfur protein subunit sdh2 of the SDH catalytic dimer, protecting it from the deleterious effects of oxidants. May act together with SDHAF1.</text>
</comment>
<comment type="subunit">
    <text evidence="1">Interacts with sdh2 within an sdh1-sdh2 subcomplex.</text>
</comment>
<comment type="subcellular location">
    <subcellularLocation>
        <location evidence="1">Mitochondrion matrix</location>
    </subcellularLocation>
</comment>
<comment type="similarity">
    <text evidence="4">Belongs to the complex I LYR family. SDHAF3 subfamily.</text>
</comment>
<gene>
    <name evidence="5" type="ORF">SPBP23A10.03c</name>
</gene>
<dbReference type="EMBL" id="CU329671">
    <property type="protein sequence ID" value="CAB66431.1"/>
    <property type="molecule type" value="Genomic_DNA"/>
</dbReference>
<dbReference type="PIR" id="T50390">
    <property type="entry name" value="T50390"/>
</dbReference>
<dbReference type="SMR" id="Q9P7Y2"/>
<dbReference type="FunCoup" id="Q9P7Y2">
    <property type="interactions" value="76"/>
</dbReference>
<dbReference type="STRING" id="284812.Q9P7Y2"/>
<dbReference type="PaxDb" id="4896-SPBP23A10.03c.1"/>
<dbReference type="EnsemblFungi" id="SPBP23A10.03c.1">
    <property type="protein sequence ID" value="SPBP23A10.03c.1:pep"/>
    <property type="gene ID" value="SPBP23A10.03c"/>
</dbReference>
<dbReference type="KEGG" id="spo:2541309"/>
<dbReference type="PomBase" id="SPBP23A10.03c"/>
<dbReference type="VEuPathDB" id="FungiDB:SPBP23A10.03c"/>
<dbReference type="eggNOG" id="KOG4100">
    <property type="taxonomic scope" value="Eukaryota"/>
</dbReference>
<dbReference type="HOGENOM" id="CLU_102310_1_0_1"/>
<dbReference type="InParanoid" id="Q9P7Y2"/>
<dbReference type="OMA" id="KRHKNCN"/>
<dbReference type="PhylomeDB" id="Q9P7Y2"/>
<dbReference type="PRO" id="PR:Q9P7Y2"/>
<dbReference type="Proteomes" id="UP000002485">
    <property type="component" value="Chromosome II"/>
</dbReference>
<dbReference type="GO" id="GO:0005758">
    <property type="term" value="C:mitochondrial intermembrane space"/>
    <property type="evidence" value="ECO:0000266"/>
    <property type="project" value="PomBase"/>
</dbReference>
<dbReference type="GO" id="GO:0005759">
    <property type="term" value="C:mitochondrial matrix"/>
    <property type="evidence" value="ECO:0007669"/>
    <property type="project" value="UniProtKB-SubCell"/>
</dbReference>
<dbReference type="GO" id="GO:0005739">
    <property type="term" value="C:mitochondrion"/>
    <property type="evidence" value="ECO:0007005"/>
    <property type="project" value="PomBase"/>
</dbReference>
<dbReference type="GO" id="GO:0034553">
    <property type="term" value="P:mitochondrial respiratory chain complex II assembly"/>
    <property type="evidence" value="ECO:0000266"/>
    <property type="project" value="PomBase"/>
</dbReference>
<dbReference type="GO" id="GO:0006105">
    <property type="term" value="P:succinate metabolic process"/>
    <property type="evidence" value="ECO:0000318"/>
    <property type="project" value="GO_Central"/>
</dbReference>
<dbReference type="CDD" id="cd20270">
    <property type="entry name" value="Complex1_LYR_SDHAF3_LYRM10"/>
    <property type="match status" value="1"/>
</dbReference>
<dbReference type="InterPro" id="IPR008381">
    <property type="entry name" value="SDHAF3/Sdh7"/>
</dbReference>
<dbReference type="PANTHER" id="PTHR13137">
    <property type="entry name" value="DC11 ACN9 HOMOLOG"/>
    <property type="match status" value="1"/>
</dbReference>
<dbReference type="PANTHER" id="PTHR13137:SF6">
    <property type="entry name" value="SUCCINATE DEHYDROGENASE ASSEMBLY FACTOR 3, MITOCHONDRIAL"/>
    <property type="match status" value="1"/>
</dbReference>
<dbReference type="Pfam" id="PF13233">
    <property type="entry name" value="Complex1_LYR_2"/>
    <property type="match status" value="1"/>
</dbReference>
<protein>
    <recommendedName>
        <fullName evidence="1">Succinate dehydrogenase assembly factor 3, mitochondrial</fullName>
        <shortName evidence="1">SDH assembly factor 3</shortName>
        <shortName evidence="1">SDHAF3</shortName>
    </recommendedName>
</protein>
<name>SDHF3_SCHPO</name>
<keyword id="KW-0143">Chaperone</keyword>
<keyword id="KW-0496">Mitochondrion</keyword>
<keyword id="KW-1185">Reference proteome</keyword>
<keyword id="KW-0809">Transit peptide</keyword>